<proteinExistence type="inferred from homology"/>
<sequence>MSEFVTVARPYAKAAFDFAVEHQAVERWQNMLAFTAQVTRNEQIAELLSGAVAPETMSTTFIAVCGDQLDEPAQNFIRVMAENGRLLVLPEVLQQFIQLRASLESTVDVEVSSARALNDEQLAKIAAAMEKRLSRKVKLNCKIDKSVMAGVVIRAGDMVIDGSVRGRLERLADVLQS</sequence>
<feature type="chain" id="PRO_0000371203" description="ATP synthase subunit delta">
    <location>
        <begin position="1"/>
        <end position="177"/>
    </location>
</feature>
<name>ATPD_YERPA</name>
<organism>
    <name type="scientific">Yersinia pestis bv. Antiqua (strain Antiqua)</name>
    <dbReference type="NCBI Taxonomy" id="360102"/>
    <lineage>
        <taxon>Bacteria</taxon>
        <taxon>Pseudomonadati</taxon>
        <taxon>Pseudomonadota</taxon>
        <taxon>Gammaproteobacteria</taxon>
        <taxon>Enterobacterales</taxon>
        <taxon>Yersiniaceae</taxon>
        <taxon>Yersinia</taxon>
    </lineage>
</organism>
<dbReference type="EMBL" id="CP000308">
    <property type="protein sequence ID" value="ABG16130.1"/>
    <property type="molecule type" value="Genomic_DNA"/>
</dbReference>
<dbReference type="RefSeq" id="WP_002220760.1">
    <property type="nucleotide sequence ID" value="NZ_CP009906.1"/>
</dbReference>
<dbReference type="SMR" id="Q1C092"/>
<dbReference type="GeneID" id="57974600"/>
<dbReference type="KEGG" id="ypa:YPA_4169"/>
<dbReference type="Proteomes" id="UP000001971">
    <property type="component" value="Chromosome"/>
</dbReference>
<dbReference type="GO" id="GO:0005886">
    <property type="term" value="C:plasma membrane"/>
    <property type="evidence" value="ECO:0007669"/>
    <property type="project" value="UniProtKB-SubCell"/>
</dbReference>
<dbReference type="GO" id="GO:0045259">
    <property type="term" value="C:proton-transporting ATP synthase complex"/>
    <property type="evidence" value="ECO:0007669"/>
    <property type="project" value="UniProtKB-KW"/>
</dbReference>
<dbReference type="GO" id="GO:0046933">
    <property type="term" value="F:proton-transporting ATP synthase activity, rotational mechanism"/>
    <property type="evidence" value="ECO:0007669"/>
    <property type="project" value="UniProtKB-UniRule"/>
</dbReference>
<dbReference type="FunFam" id="1.10.520.20:FF:000001">
    <property type="entry name" value="ATP synthase subunit delta"/>
    <property type="match status" value="1"/>
</dbReference>
<dbReference type="Gene3D" id="1.10.520.20">
    <property type="entry name" value="N-terminal domain of the delta subunit of the F1F0-ATP synthase"/>
    <property type="match status" value="1"/>
</dbReference>
<dbReference type="HAMAP" id="MF_01416">
    <property type="entry name" value="ATP_synth_delta_bact"/>
    <property type="match status" value="1"/>
</dbReference>
<dbReference type="InterPro" id="IPR026015">
    <property type="entry name" value="ATP_synth_OSCP/delta_N_sf"/>
</dbReference>
<dbReference type="InterPro" id="IPR020781">
    <property type="entry name" value="ATPase_OSCP/d_CS"/>
</dbReference>
<dbReference type="InterPro" id="IPR000711">
    <property type="entry name" value="ATPase_OSCP/dsu"/>
</dbReference>
<dbReference type="NCBIfam" id="TIGR01145">
    <property type="entry name" value="ATP_synt_delta"/>
    <property type="match status" value="1"/>
</dbReference>
<dbReference type="NCBIfam" id="NF004402">
    <property type="entry name" value="PRK05758.2-2"/>
    <property type="match status" value="1"/>
</dbReference>
<dbReference type="NCBIfam" id="NF004404">
    <property type="entry name" value="PRK05758.2-5"/>
    <property type="match status" value="1"/>
</dbReference>
<dbReference type="PANTHER" id="PTHR11910">
    <property type="entry name" value="ATP SYNTHASE DELTA CHAIN"/>
    <property type="match status" value="1"/>
</dbReference>
<dbReference type="Pfam" id="PF00213">
    <property type="entry name" value="OSCP"/>
    <property type="match status" value="1"/>
</dbReference>
<dbReference type="PRINTS" id="PR00125">
    <property type="entry name" value="ATPASEDELTA"/>
</dbReference>
<dbReference type="SUPFAM" id="SSF47928">
    <property type="entry name" value="N-terminal domain of the delta subunit of the F1F0-ATP synthase"/>
    <property type="match status" value="1"/>
</dbReference>
<dbReference type="PROSITE" id="PS00389">
    <property type="entry name" value="ATPASE_DELTA"/>
    <property type="match status" value="1"/>
</dbReference>
<keyword id="KW-0066">ATP synthesis</keyword>
<keyword id="KW-0997">Cell inner membrane</keyword>
<keyword id="KW-1003">Cell membrane</keyword>
<keyword id="KW-0139">CF(1)</keyword>
<keyword id="KW-0375">Hydrogen ion transport</keyword>
<keyword id="KW-0406">Ion transport</keyword>
<keyword id="KW-0472">Membrane</keyword>
<keyword id="KW-0813">Transport</keyword>
<evidence type="ECO:0000255" key="1">
    <source>
        <dbReference type="HAMAP-Rule" id="MF_01416"/>
    </source>
</evidence>
<gene>
    <name evidence="1" type="primary">atpH</name>
    <name type="ordered locus">YPA_4169</name>
</gene>
<accession>Q1C092</accession>
<reference key="1">
    <citation type="journal article" date="2006" name="J. Bacteriol.">
        <title>Complete genome sequence of Yersinia pestis strains Antiqua and Nepal516: evidence of gene reduction in an emerging pathogen.</title>
        <authorList>
            <person name="Chain P.S.G."/>
            <person name="Hu P."/>
            <person name="Malfatti S.A."/>
            <person name="Radnedge L."/>
            <person name="Larimer F."/>
            <person name="Vergez L.M."/>
            <person name="Worsham P."/>
            <person name="Chu M.C."/>
            <person name="Andersen G.L."/>
        </authorList>
    </citation>
    <scope>NUCLEOTIDE SEQUENCE [LARGE SCALE GENOMIC DNA]</scope>
    <source>
        <strain>Antiqua</strain>
    </source>
</reference>
<comment type="function">
    <text evidence="1">F(1)F(0) ATP synthase produces ATP from ADP in the presence of a proton or sodium gradient. F-type ATPases consist of two structural domains, F(1) containing the extramembraneous catalytic core and F(0) containing the membrane proton channel, linked together by a central stalk and a peripheral stalk. During catalysis, ATP synthesis in the catalytic domain of F(1) is coupled via a rotary mechanism of the central stalk subunits to proton translocation.</text>
</comment>
<comment type="function">
    <text evidence="1">This protein is part of the stalk that links CF(0) to CF(1). It either transmits conformational changes from CF(0) to CF(1) or is implicated in proton conduction.</text>
</comment>
<comment type="subunit">
    <text evidence="1">F-type ATPases have 2 components, F(1) - the catalytic core - and F(0) - the membrane proton channel. F(1) has five subunits: alpha(3), beta(3), gamma(1), delta(1), epsilon(1). F(0) has three main subunits: a(1), b(2) and c(10-14). The alpha and beta chains form an alternating ring which encloses part of the gamma chain. F(1) is attached to F(0) by a central stalk formed by the gamma and epsilon chains, while a peripheral stalk is formed by the delta and b chains.</text>
</comment>
<comment type="subcellular location">
    <subcellularLocation>
        <location evidence="1">Cell inner membrane</location>
        <topology evidence="1">Peripheral membrane protein</topology>
    </subcellularLocation>
</comment>
<comment type="similarity">
    <text evidence="1">Belongs to the ATPase delta chain family.</text>
</comment>
<protein>
    <recommendedName>
        <fullName evidence="1">ATP synthase subunit delta</fullName>
    </recommendedName>
    <alternativeName>
        <fullName evidence="1">ATP synthase F(1) sector subunit delta</fullName>
    </alternativeName>
    <alternativeName>
        <fullName evidence="1">F-type ATPase subunit delta</fullName>
        <shortName evidence="1">F-ATPase subunit delta</shortName>
    </alternativeName>
</protein>